<evidence type="ECO:0000250" key="1"/>
<evidence type="ECO:0000250" key="2">
    <source>
        <dbReference type="UniProtKB" id="P08648"/>
    </source>
</evidence>
<evidence type="ECO:0000255" key="3"/>
<evidence type="ECO:0000255" key="4">
    <source>
        <dbReference type="PROSITE-ProRule" id="PRU00803"/>
    </source>
</evidence>
<evidence type="ECO:0000269" key="5">
    <source>
    </source>
</evidence>
<evidence type="ECO:0000269" key="6">
    <source>
    </source>
</evidence>
<evidence type="ECO:0000269" key="7">
    <source>
    </source>
</evidence>
<evidence type="ECO:0000269" key="8">
    <source>
    </source>
</evidence>
<evidence type="ECO:0000269" key="9">
    <source>
    </source>
</evidence>
<evidence type="ECO:0000269" key="10">
    <source>
    </source>
</evidence>
<evidence type="ECO:0000269" key="11">
    <source ref="1"/>
</evidence>
<evidence type="ECO:0000305" key="12"/>
<name>ITA8_HUMAN</name>
<gene>
    <name type="primary">ITGA8</name>
</gene>
<sequence length="1063" mass="117474">MSPGASRGPRGSQAPLIAPLCCAAAALGMLLWSPACQAFNLDVEKLTVYSGPKGSYFGYAVDFHIPDARTASVLVGAPKANTSQPDIVEGGAVYYCPWPAEGSAQCRQIPFDTTNNRKIRVNGTKEPIEFKSNQWFGATVKAHKGKVVACAPLYHWRTLKPTPEKDPVGTCYVAIQNFSAYAEFSPCRNSNADPEGQGYCQAGFSLDFYKNGDLIVGGPGSFYWQGQVITASVADIIANYSFKDILRKLAGEKQTEVAPASYDDSYLGYSVAAGEFTGDSQQELVAGIPRGAQNFGYVSIINSTDMTFIQNFTGEQMASYFGYTVVVSDVNSDGLDDVLVGAPLFMEREFESNPREVGQIYLYLQVSSLLFRDPQILTGTETFGRFGSAMAHLGDLNQDGYNDIAIGVPFAGKDQRGKVLIYNGNKDGLNTKPSQVLQGVWASHAVPSGFGFTLRGDSDIDKNDYPDLIVGAFGTGKVAVYRARPVVTVDAQLLLHPMIINLENKTCQVPDSMTSAACFSLRVCASVTGQSIANTIVLMAEVQLDSLKQKGAIKRTLFLDNHQAHRVFPLVIKRQKSHQCQDFIVYLRDETEFRDKLSPINISLNYSLDESTFKEGLEVKPILNYYRENIVSEQAHILVDCGEDNLCVPDLKLSARPDKHQVIIGDENHLMLIINARNEGEGAYEAELFVMIPEEADYVGIERNNKGFRPLSCEYKMENVTRMVVCDLGNPMVSGTNYSLGLRFAVPRLEKTNMSINFDLQIRSSNKDNPDSNFVSLQINITAVAQVEIRGVSHPPQIVLPIHNWEPEEEPHKEEEVGPLVEHIYELHNIGPSTISDTILEVGWPFSARDEFLLYIFHIQTLGPLQCQPNPNINPQDIKPAASPEDTPELSAFLRNSTIPHLVRKRDVHVVEFHRQSPAKILNCTNIECLQISCAVGRLEGGESAVLKVRSRLWAHTFLQRKNDPYALASLVSFEVKKMPYTDQPAKLPEGSIVIKTSVIWATPNVSFSIPLWVIILAILLGLLVLAILTLALWKCGFFDRARPPQEDMTDREQLTNDKTPEA</sequence>
<comment type="function">
    <text evidence="6 8">Integrin alpha-8/beta-1 functions in the genesis of kidney and probably of other organs by regulating the recruitment of mesenchymal cells into epithelial structures. It recognizes the sequence R-G-D in a wide array of ligands including TNC, FN1, SPP1 TGFB1, TGFB3 and VTN. NPNT is probably its functional ligand in kidney genesis. Neuronal receptor for TNC it mediates cell-cell interactions and regulates neurite outgrowth of sensory and motor neurons.</text>
</comment>
<comment type="subunit">
    <text>Heterodimer of an alpha and a beta subunit. The alpha subunit is composed of a heavy and a light chain linked by a disulfide bond. Alpha-8 associates with beta-1.</text>
</comment>
<comment type="subcellular location">
    <subcellularLocation>
        <location evidence="9">Membrane</location>
        <topology evidence="9">Single-pass type I membrane protein</topology>
    </subcellularLocation>
    <subcellularLocation>
        <location evidence="9">Cell membrane</location>
    </subcellularLocation>
</comment>
<comment type="tissue specificity">
    <text evidence="5 10">Expressed in mesenchymal cells, including alveolar myofibroblasts, kidney mesangial cells and hepatic stellar cells and vascular and visceral smooth muscle (at protein level).</text>
</comment>
<comment type="disease" evidence="9">
    <disease id="DI-02253">
        <name>Renal hypodysplasia/aplasia 1</name>
        <acronym>RHDA1</acronym>
        <description>A perinatally lethal renal disease encompassing a spectrum of kidney development defects, including renal agenesis, bilateral renal aplasia, hypoplasia, (cystic) dysplasia, and severe obstructive uropathy.</description>
        <dbReference type="MIM" id="191830"/>
    </disease>
    <text>The disease is caused by variants affecting the gene represented in this entry.</text>
</comment>
<comment type="similarity">
    <text evidence="12">Belongs to the integrin alpha chain family.</text>
</comment>
<accession>P53708</accession>
<accession>B0YJ31</accession>
<accession>Q5VX94</accession>
<feature type="signal peptide" evidence="3">
    <location>
        <begin position="1"/>
        <end position="38"/>
    </location>
</feature>
<feature type="chain" id="PRO_0000016310" description="Integrin alpha-8">
    <location>
        <begin position="39"/>
        <end position="1063"/>
    </location>
</feature>
<feature type="chain" id="PRO_0000016311" description="Integrin alpha-8 heavy chain" evidence="3">
    <location>
        <begin position="39"/>
        <end position="906"/>
    </location>
</feature>
<feature type="chain" id="PRO_0000016312" description="Integrin alpha-8 light chain" evidence="3">
    <location>
        <begin position="907"/>
        <end position="1063"/>
    </location>
</feature>
<feature type="topological domain" description="Extracellular" evidence="3">
    <location>
        <begin position="39"/>
        <end position="1012"/>
    </location>
</feature>
<feature type="transmembrane region" description="Helical" evidence="3">
    <location>
        <begin position="1013"/>
        <end position="1033"/>
    </location>
</feature>
<feature type="topological domain" description="Cytoplasmic" evidence="3">
    <location>
        <begin position="1034"/>
        <end position="1063"/>
    </location>
</feature>
<feature type="repeat" description="FG-GAP 1" evidence="4">
    <location>
        <begin position="44"/>
        <end position="105"/>
    </location>
</feature>
<feature type="repeat" description="FG-GAP 2" evidence="4">
    <location>
        <begin position="122"/>
        <end position="183"/>
    </location>
</feature>
<feature type="repeat" description="FG-GAP 3" evidence="4">
    <location>
        <begin position="188"/>
        <end position="240"/>
    </location>
</feature>
<feature type="repeat" description="FG-GAP 4" evidence="4">
    <location>
        <begin position="253"/>
        <end position="306"/>
    </location>
</feature>
<feature type="repeat" description="FG-GAP 5" evidence="4">
    <location>
        <begin position="307"/>
        <end position="372"/>
    </location>
</feature>
<feature type="repeat" description="FG-GAP 6" evidence="4">
    <location>
        <begin position="373"/>
        <end position="431"/>
    </location>
</feature>
<feature type="repeat" description="FG-GAP 7" evidence="4">
    <location>
        <begin position="435"/>
        <end position="498"/>
    </location>
</feature>
<feature type="short sequence motif" description="Cell attachment site" evidence="3">
    <location>
        <begin position="455"/>
        <end position="457"/>
    </location>
</feature>
<feature type="binding site" evidence="2">
    <location>
        <position position="275"/>
    </location>
    <ligand>
        <name>Ca(2+)</name>
        <dbReference type="ChEBI" id="CHEBI:29108"/>
        <label>1</label>
    </ligand>
</feature>
<feature type="binding site" evidence="2">
    <location>
        <position position="277"/>
    </location>
    <ligand>
        <name>Ca(2+)</name>
        <dbReference type="ChEBI" id="CHEBI:29108"/>
        <label>1</label>
    </ligand>
</feature>
<feature type="binding site" evidence="2">
    <location>
        <position position="279"/>
    </location>
    <ligand>
        <name>Ca(2+)</name>
        <dbReference type="ChEBI" id="CHEBI:29108"/>
        <label>1</label>
    </ligand>
</feature>
<feature type="binding site" evidence="2">
    <location>
        <position position="283"/>
    </location>
    <ligand>
        <name>Ca(2+)</name>
        <dbReference type="ChEBI" id="CHEBI:29108"/>
        <label>1</label>
    </ligand>
</feature>
<feature type="binding site" evidence="2">
    <location>
        <position position="329"/>
    </location>
    <ligand>
        <name>Ca(2+)</name>
        <dbReference type="ChEBI" id="CHEBI:29108"/>
        <label>2</label>
    </ligand>
</feature>
<feature type="binding site" evidence="2">
    <location>
        <position position="331"/>
    </location>
    <ligand>
        <name>Ca(2+)</name>
        <dbReference type="ChEBI" id="CHEBI:29108"/>
        <label>2</label>
    </ligand>
</feature>
<feature type="binding site" evidence="2">
    <location>
        <position position="333"/>
    </location>
    <ligand>
        <name>Ca(2+)</name>
        <dbReference type="ChEBI" id="CHEBI:29108"/>
        <label>2</label>
    </ligand>
</feature>
<feature type="binding site" evidence="2">
    <location>
        <position position="335"/>
    </location>
    <ligand>
        <name>Ca(2+)</name>
        <dbReference type="ChEBI" id="CHEBI:29108"/>
        <label>2</label>
    </ligand>
</feature>
<feature type="binding site" evidence="2">
    <location>
        <position position="337"/>
    </location>
    <ligand>
        <name>Ca(2+)</name>
        <dbReference type="ChEBI" id="CHEBI:29108"/>
        <label>2</label>
    </ligand>
</feature>
<feature type="binding site" evidence="2">
    <location>
        <position position="395"/>
    </location>
    <ligand>
        <name>Ca(2+)</name>
        <dbReference type="ChEBI" id="CHEBI:29108"/>
        <label>3</label>
    </ligand>
</feature>
<feature type="binding site" evidence="2">
    <location>
        <position position="397"/>
    </location>
    <ligand>
        <name>Ca(2+)</name>
        <dbReference type="ChEBI" id="CHEBI:29108"/>
        <label>3</label>
    </ligand>
</feature>
<feature type="binding site" evidence="2">
    <location>
        <position position="399"/>
    </location>
    <ligand>
        <name>Ca(2+)</name>
        <dbReference type="ChEBI" id="CHEBI:29108"/>
        <label>3</label>
    </ligand>
</feature>
<feature type="binding site" evidence="2">
    <location>
        <position position="401"/>
    </location>
    <ligand>
        <name>Ca(2+)</name>
        <dbReference type="ChEBI" id="CHEBI:29108"/>
        <label>3</label>
    </ligand>
</feature>
<feature type="binding site" evidence="2">
    <location>
        <position position="403"/>
    </location>
    <ligand>
        <name>Ca(2+)</name>
        <dbReference type="ChEBI" id="CHEBI:29108"/>
        <label>3</label>
    </ligand>
</feature>
<feature type="binding site" evidence="2">
    <location>
        <position position="459"/>
    </location>
    <ligand>
        <name>Ca(2+)</name>
        <dbReference type="ChEBI" id="CHEBI:29108"/>
        <label>4</label>
    </ligand>
</feature>
<feature type="binding site" evidence="2">
    <location>
        <position position="461"/>
    </location>
    <ligand>
        <name>Ca(2+)</name>
        <dbReference type="ChEBI" id="CHEBI:29108"/>
        <label>4</label>
    </ligand>
</feature>
<feature type="binding site" evidence="2">
    <location>
        <position position="463"/>
    </location>
    <ligand>
        <name>Ca(2+)</name>
        <dbReference type="ChEBI" id="CHEBI:29108"/>
        <label>4</label>
    </ligand>
</feature>
<feature type="binding site" evidence="2">
    <location>
        <position position="465"/>
    </location>
    <ligand>
        <name>Ca(2+)</name>
        <dbReference type="ChEBI" id="CHEBI:29108"/>
        <label>4</label>
    </ligand>
</feature>
<feature type="binding site" evidence="2">
    <location>
        <position position="467"/>
    </location>
    <ligand>
        <name>Ca(2+)</name>
        <dbReference type="ChEBI" id="CHEBI:29108"/>
        <label>4</label>
    </ligand>
</feature>
<feature type="glycosylation site" description="N-linked (GlcNAc...) asparagine" evidence="3">
    <location>
        <position position="81"/>
    </location>
</feature>
<feature type="glycosylation site" description="N-linked (GlcNAc...) asparagine" evidence="3">
    <location>
        <position position="122"/>
    </location>
</feature>
<feature type="glycosylation site" description="N-linked (GlcNAc...) asparagine" evidence="3">
    <location>
        <position position="177"/>
    </location>
</feature>
<feature type="glycosylation site" description="N-linked (GlcNAc...) asparagine" evidence="3">
    <location>
        <position position="239"/>
    </location>
</feature>
<feature type="glycosylation site" description="N-linked (GlcNAc...) asparagine" evidence="3">
    <location>
        <position position="302"/>
    </location>
</feature>
<feature type="glycosylation site" description="N-linked (GlcNAc...) asparagine" evidence="3">
    <location>
        <position position="311"/>
    </location>
</feature>
<feature type="glycosylation site" description="N-linked (GlcNAc...) asparagine" evidence="3">
    <location>
        <position position="504"/>
    </location>
</feature>
<feature type="glycosylation site" description="N-linked (GlcNAc...) asparagine" evidence="3">
    <location>
        <position position="601"/>
    </location>
</feature>
<feature type="glycosylation site" description="N-linked (GlcNAc...) asparagine" evidence="3">
    <location>
        <position position="605"/>
    </location>
</feature>
<feature type="glycosylation site" description="N-linked (GlcNAc...) asparagine" evidence="3">
    <location>
        <position position="719"/>
    </location>
</feature>
<feature type="glycosylation site" description="N-linked (GlcNAc...) asparagine" evidence="3">
    <location>
        <position position="737"/>
    </location>
</feature>
<feature type="glycosylation site" description="N-linked (GlcNAc...) asparagine" evidence="3">
    <location>
        <position position="753"/>
    </location>
</feature>
<feature type="glycosylation site" description="N-linked (GlcNAc...) asparagine" evidence="3">
    <location>
        <position position="780"/>
    </location>
</feature>
<feature type="glycosylation site" description="N-linked (GlcNAc...) asparagine" evidence="3">
    <location>
        <position position="896"/>
    </location>
</feature>
<feature type="glycosylation site" description="N-linked (GlcNAc...) asparagine" evidence="3">
    <location>
        <position position="923"/>
    </location>
</feature>
<feature type="glycosylation site" description="N-linked (GlcNAc...) asparagine" evidence="3">
    <location>
        <position position="1005"/>
    </location>
</feature>
<feature type="disulfide bond" evidence="1">
    <location>
        <begin position="96"/>
        <end position="106"/>
    </location>
</feature>
<feature type="disulfide bond" evidence="1">
    <location>
        <begin position="150"/>
        <end position="171"/>
    </location>
</feature>
<feature type="disulfide bond" evidence="1">
    <location>
        <begin position="187"/>
        <end position="200"/>
    </location>
</feature>
<feature type="disulfide bond" evidence="1">
    <location>
        <begin position="507"/>
        <end position="518"/>
    </location>
</feature>
<feature type="disulfide bond" evidence="1">
    <location>
        <begin position="524"/>
        <end position="580"/>
    </location>
</feature>
<feature type="disulfide bond" evidence="1">
    <location>
        <begin position="641"/>
        <end position="647"/>
    </location>
</feature>
<feature type="disulfide bond" evidence="1">
    <location>
        <begin position="713"/>
        <end position="726"/>
    </location>
</feature>
<feature type="disulfide bond" description="Interchain (between heavy and light chains)" evidence="1">
    <location>
        <begin position="867"/>
        <end position="924"/>
    </location>
</feature>
<feature type="disulfide bond" evidence="1">
    <location>
        <begin position="929"/>
        <end position="934"/>
    </location>
</feature>
<feature type="sequence variant" id="VAR_018673" description="In dbSNP:rs7895372." evidence="11">
    <original>V</original>
    <variation>L</variation>
    <location>
        <position position="216"/>
    </location>
</feature>
<feature type="sequence variant" id="VAR_071106" description="In RHDA1; uncertain significance; dbSNP:rs587777281." evidence="9">
    <original>T</original>
    <variation>M</variation>
    <location>
        <position position="255"/>
    </location>
</feature>
<feature type="sequence variant" id="VAR_071107" description="In RHDA1; the mutant does not localize at the cell membrane; dbSNP:rs374664941." evidence="9">
    <original>G</original>
    <variation>R</variation>
    <location>
        <position position="407"/>
    </location>
</feature>
<feature type="sequence variant" id="VAR_034682" evidence="7">
    <original>V</original>
    <variation>L</variation>
    <location>
        <position position="567"/>
    </location>
</feature>
<feature type="sequence variant" id="VAR_018674" description="In dbSNP:rs2298033." evidence="7 11">
    <original>S</original>
    <variation>F</variation>
    <location>
        <position position="577"/>
    </location>
</feature>
<feature type="sequence variant" id="VAR_018675" description="In dbSNP:rs9333269." evidence="7 11">
    <original>Q</original>
    <variation>P</variation>
    <location>
        <position position="581"/>
    </location>
</feature>
<feature type="sequence variant" id="VAR_018676" description="In dbSNP:rs9333174." evidence="7 11">
    <original>R</original>
    <variation>H</variation>
    <location>
        <position position="748"/>
    </location>
</feature>
<feature type="sequence variant" id="VAR_018677" description="In dbSNP:rs9333241." evidence="7 11">
    <original>I</original>
    <variation>V</variation>
    <location>
        <position position="993"/>
    </location>
</feature>
<feature type="sequence variant" id="VAR_018678" description="In dbSNP:rs1041135." evidence="7 10 11">
    <original>V</original>
    <variation>A</variation>
    <location>
        <position position="994"/>
    </location>
</feature>
<feature type="sequence conflict" description="In Ref. 5; AAA93514." evidence="12" ref="5">
    <original>T</original>
    <variation>A</variation>
    <location>
        <position position="47"/>
    </location>
</feature>
<feature type="sequence conflict" description="In Ref. 5; AAA93514." evidence="12" ref="5">
    <original>D</original>
    <variation>G</variation>
    <location>
        <position position="166"/>
    </location>
</feature>
<feature type="sequence conflict" description="In Ref. 5; AAA93514." evidence="12" ref="5">
    <original>R</original>
    <variation>G</variation>
    <location>
        <position position="188"/>
    </location>
</feature>
<feature type="sequence conflict" description="In Ref. 5; AAA93514." evidence="12" ref="5">
    <original>T</original>
    <variation>Y</variation>
    <location>
        <position position="304"/>
    </location>
</feature>
<proteinExistence type="evidence at protein level"/>
<protein>
    <recommendedName>
        <fullName>Integrin alpha-8</fullName>
    </recommendedName>
    <component>
        <recommendedName>
            <fullName>Integrin alpha-8 heavy chain</fullName>
        </recommendedName>
    </component>
    <component>
        <recommendedName>
            <fullName>Integrin alpha-8 light chain</fullName>
        </recommendedName>
    </component>
</protein>
<keyword id="KW-0106">Calcium</keyword>
<keyword id="KW-0130">Cell adhesion</keyword>
<keyword id="KW-1003">Cell membrane</keyword>
<keyword id="KW-0165">Cleavage on pair of basic residues</keyword>
<keyword id="KW-0217">Developmental protein</keyword>
<keyword id="KW-0221">Differentiation</keyword>
<keyword id="KW-0225">Disease variant</keyword>
<keyword id="KW-1015">Disulfide bond</keyword>
<keyword id="KW-0325">Glycoprotein</keyword>
<keyword id="KW-0401">Integrin</keyword>
<keyword id="KW-0472">Membrane</keyword>
<keyword id="KW-0479">Metal-binding</keyword>
<keyword id="KW-0524">Neurogenesis</keyword>
<keyword id="KW-1267">Proteomics identification</keyword>
<keyword id="KW-0675">Receptor</keyword>
<keyword id="KW-1185">Reference proteome</keyword>
<keyword id="KW-0677">Repeat</keyword>
<keyword id="KW-0732">Signal</keyword>
<keyword id="KW-0812">Transmembrane</keyword>
<keyword id="KW-1133">Transmembrane helix</keyword>
<organism>
    <name type="scientific">Homo sapiens</name>
    <name type="common">Human</name>
    <dbReference type="NCBI Taxonomy" id="9606"/>
    <lineage>
        <taxon>Eukaryota</taxon>
        <taxon>Metazoa</taxon>
        <taxon>Chordata</taxon>
        <taxon>Craniata</taxon>
        <taxon>Vertebrata</taxon>
        <taxon>Euteleostomi</taxon>
        <taxon>Mammalia</taxon>
        <taxon>Eutheria</taxon>
        <taxon>Euarchontoglires</taxon>
        <taxon>Primates</taxon>
        <taxon>Haplorrhini</taxon>
        <taxon>Catarrhini</taxon>
        <taxon>Hominidae</taxon>
        <taxon>Homo</taxon>
    </lineage>
</organism>
<reference key="1">
    <citation type="submission" date="2004-01" db="EMBL/GenBank/DDBJ databases">
        <authorList>
            <consortium name="SeattleSNPs variation discovery resource"/>
        </authorList>
    </citation>
    <scope>NUCLEOTIDE SEQUENCE [GENOMIC DNA]</scope>
    <scope>VARIANTS LEU-216; PHE-577; PRO-581; HIS-748; VAL-993 AND ALA-994</scope>
</reference>
<reference key="2">
    <citation type="submission" date="2007-02" db="EMBL/GenBank/DDBJ databases">
        <authorList>
            <consortium name="NHLBI resequencing and genotyping service (RS&amp;G)"/>
        </authorList>
    </citation>
    <scope>NUCLEOTIDE SEQUENCE [GENOMIC DNA]</scope>
</reference>
<reference key="3">
    <citation type="journal article" date="2004" name="Nature">
        <title>The DNA sequence and comparative analysis of human chromosome 10.</title>
        <authorList>
            <person name="Deloukas P."/>
            <person name="Earthrowl M.E."/>
            <person name="Grafham D.V."/>
            <person name="Rubenfield M."/>
            <person name="French L."/>
            <person name="Steward C.A."/>
            <person name="Sims S.K."/>
            <person name="Jones M.C."/>
            <person name="Searle S."/>
            <person name="Scott C."/>
            <person name="Howe K."/>
            <person name="Hunt S.E."/>
            <person name="Andrews T.D."/>
            <person name="Gilbert J.G.R."/>
            <person name="Swarbreck D."/>
            <person name="Ashurst J.L."/>
            <person name="Taylor A."/>
            <person name="Battles J."/>
            <person name="Bird C.P."/>
            <person name="Ainscough R."/>
            <person name="Almeida J.P."/>
            <person name="Ashwell R.I.S."/>
            <person name="Ambrose K.D."/>
            <person name="Babbage A.K."/>
            <person name="Bagguley C.L."/>
            <person name="Bailey J."/>
            <person name="Banerjee R."/>
            <person name="Bates K."/>
            <person name="Beasley H."/>
            <person name="Bray-Allen S."/>
            <person name="Brown A.J."/>
            <person name="Brown J.Y."/>
            <person name="Burford D.C."/>
            <person name="Burrill W."/>
            <person name="Burton J."/>
            <person name="Cahill P."/>
            <person name="Camire D."/>
            <person name="Carter N.P."/>
            <person name="Chapman J.C."/>
            <person name="Clark S.Y."/>
            <person name="Clarke G."/>
            <person name="Clee C.M."/>
            <person name="Clegg S."/>
            <person name="Corby N."/>
            <person name="Coulson A."/>
            <person name="Dhami P."/>
            <person name="Dutta I."/>
            <person name="Dunn M."/>
            <person name="Faulkner L."/>
            <person name="Frankish A."/>
            <person name="Frankland J.A."/>
            <person name="Garner P."/>
            <person name="Garnett J."/>
            <person name="Gribble S."/>
            <person name="Griffiths C."/>
            <person name="Grocock R."/>
            <person name="Gustafson E."/>
            <person name="Hammond S."/>
            <person name="Harley J.L."/>
            <person name="Hart E."/>
            <person name="Heath P.D."/>
            <person name="Ho T.P."/>
            <person name="Hopkins B."/>
            <person name="Horne J."/>
            <person name="Howden P.J."/>
            <person name="Huckle E."/>
            <person name="Hynds C."/>
            <person name="Johnson C."/>
            <person name="Johnson D."/>
            <person name="Kana A."/>
            <person name="Kay M."/>
            <person name="Kimberley A.M."/>
            <person name="Kershaw J.K."/>
            <person name="Kokkinaki M."/>
            <person name="Laird G.K."/>
            <person name="Lawlor S."/>
            <person name="Lee H.M."/>
            <person name="Leongamornlert D.A."/>
            <person name="Laird G."/>
            <person name="Lloyd C."/>
            <person name="Lloyd D.M."/>
            <person name="Loveland J."/>
            <person name="Lovell J."/>
            <person name="McLaren S."/>
            <person name="McLay K.E."/>
            <person name="McMurray A."/>
            <person name="Mashreghi-Mohammadi M."/>
            <person name="Matthews L."/>
            <person name="Milne S."/>
            <person name="Nickerson T."/>
            <person name="Nguyen M."/>
            <person name="Overton-Larty E."/>
            <person name="Palmer S.A."/>
            <person name="Pearce A.V."/>
            <person name="Peck A.I."/>
            <person name="Pelan S."/>
            <person name="Phillimore B."/>
            <person name="Porter K."/>
            <person name="Rice C.M."/>
            <person name="Rogosin A."/>
            <person name="Ross M.T."/>
            <person name="Sarafidou T."/>
            <person name="Sehra H.K."/>
            <person name="Shownkeen R."/>
            <person name="Skuce C.D."/>
            <person name="Smith M."/>
            <person name="Standring L."/>
            <person name="Sycamore N."/>
            <person name="Tester J."/>
            <person name="Thorpe A."/>
            <person name="Torcasso W."/>
            <person name="Tracey A."/>
            <person name="Tromans A."/>
            <person name="Tsolas J."/>
            <person name="Wall M."/>
            <person name="Walsh J."/>
            <person name="Wang H."/>
            <person name="Weinstock K."/>
            <person name="West A.P."/>
            <person name="Willey D.L."/>
            <person name="Whitehead S.L."/>
            <person name="Wilming L."/>
            <person name="Wray P.W."/>
            <person name="Young L."/>
            <person name="Chen Y."/>
            <person name="Lovering R.C."/>
            <person name="Moschonas N.K."/>
            <person name="Siebert R."/>
            <person name="Fechtel K."/>
            <person name="Bentley D."/>
            <person name="Durbin R.M."/>
            <person name="Hubbard T."/>
            <person name="Doucette-Stamm L."/>
            <person name="Beck S."/>
            <person name="Smith D.R."/>
            <person name="Rogers J."/>
        </authorList>
    </citation>
    <scope>NUCLEOTIDE SEQUENCE [LARGE SCALE GENOMIC DNA]</scope>
</reference>
<reference key="4">
    <citation type="submission" date="2005-09" db="EMBL/GenBank/DDBJ databases">
        <authorList>
            <person name="Mural R.J."/>
            <person name="Istrail S."/>
            <person name="Sutton G.G."/>
            <person name="Florea L."/>
            <person name="Halpern A.L."/>
            <person name="Mobarry C.M."/>
            <person name="Lippert R."/>
            <person name="Walenz B."/>
            <person name="Shatkay H."/>
            <person name="Dew I."/>
            <person name="Miller J.R."/>
            <person name="Flanigan M.J."/>
            <person name="Edwards N.J."/>
            <person name="Bolanos R."/>
            <person name="Fasulo D."/>
            <person name="Halldorsson B.V."/>
            <person name="Hannenhalli S."/>
            <person name="Turner R."/>
            <person name="Yooseph S."/>
            <person name="Lu F."/>
            <person name="Nusskern D.R."/>
            <person name="Shue B.C."/>
            <person name="Zheng X.H."/>
            <person name="Zhong F."/>
            <person name="Delcher A.L."/>
            <person name="Huson D.H."/>
            <person name="Kravitz S.A."/>
            <person name="Mouchard L."/>
            <person name="Reinert K."/>
            <person name="Remington K.A."/>
            <person name="Clark A.G."/>
            <person name="Waterman M.S."/>
            <person name="Eichler E.E."/>
            <person name="Adams M.D."/>
            <person name="Hunkapiller M.W."/>
            <person name="Myers E.W."/>
            <person name="Venter J.C."/>
        </authorList>
    </citation>
    <scope>NUCLEOTIDE SEQUENCE [LARGE SCALE GENOMIC DNA]</scope>
</reference>
<reference key="5">
    <citation type="journal article" date="1995" name="J. Cell Sci.">
        <title>Sequence and tissue distribution of the human integrin alpha 8 subunit: a beta 1-associated alpha subunit expressed in smooth muscle cells.</title>
        <authorList>
            <person name="Schnapp L.M."/>
            <person name="Breuss J.M."/>
            <person name="Ramos D.M."/>
            <person name="Sheppard D."/>
            <person name="Pytela R."/>
        </authorList>
    </citation>
    <scope>NUCLEOTIDE SEQUENCE [MRNA] OF 39-1063</scope>
    <scope>TISSUE SPECIFICITY</scope>
    <scope>VARIANT ALA-994</scope>
</reference>
<reference key="6">
    <citation type="journal article" date="1999" name="Kidney Int.">
        <title>Alpha8 integrin in glomerular mesangial cells and in experimental glomerulonephritis.</title>
        <authorList>
            <person name="Hartner A."/>
            <person name="Schoecklmann H."/>
            <person name="Proels F."/>
            <person name="Mueller U."/>
            <person name="Sterzel R.B."/>
        </authorList>
    </citation>
    <scope>TISSUE SPECIFICITY</scope>
</reference>
<reference key="7">
    <citation type="journal article" date="2002" name="J. Cell Sci.">
        <title>Integrin alpha8beta1 mediates adhesion to LAP-TGFbeta1.</title>
        <authorList>
            <person name="Lu M."/>
            <person name="Munger J.S."/>
            <person name="Steadele M."/>
            <person name="Busald C."/>
            <person name="Tellier M."/>
            <person name="Schnapp L.M."/>
        </authorList>
    </citation>
    <scope>FUNCTION</scope>
</reference>
<reference key="8">
    <citation type="journal article" date="2005" name="Biochem. Biophys. Res. Commun.">
        <title>Integrin alpha8beta1-fibronectin interactions promote cell survival via PI3 kinase pathway.</title>
        <authorList>
            <person name="Farias E."/>
            <person name="Lu M."/>
            <person name="Li X."/>
            <person name="Schnapp L.M."/>
        </authorList>
    </citation>
    <scope>FUNCTION</scope>
</reference>
<reference key="9">
    <citation type="journal article" date="2014" name="Am. J. Hum. Genet.">
        <title>Integrin alpha 8 recessive mutations are responsible for bilateral renal agenesis in humans.</title>
        <authorList>
            <person name="Humbert C."/>
            <person name="Silbermann F."/>
            <person name="Morar B."/>
            <person name="Parisot M."/>
            <person name="Zarhrate M."/>
            <person name="Masson C."/>
            <person name="Tores F."/>
            <person name="Blanchet P."/>
            <person name="Perez M.J."/>
            <person name="Petrov Y."/>
            <person name="Khau Van Kien P."/>
            <person name="Roume J."/>
            <person name="Leroy B."/>
            <person name="Gribouval O."/>
            <person name="Kalaydjieva L."/>
            <person name="Heidet L."/>
            <person name="Salomon R."/>
            <person name="Antignac C."/>
            <person name="Benmerah A."/>
            <person name="Saunier S."/>
            <person name="Jeanpierre C."/>
        </authorList>
    </citation>
    <scope>SUBCELLULAR LOCATION</scope>
    <scope>VARIANTS RHDA1 MET-255 AND ARG-407</scope>
    <scope>CHARACTERIZATION OF VARIANT RHDA1 ARG-407</scope>
</reference>
<reference key="10">
    <citation type="journal article" date="2004" name="Matrix Biol.">
        <title>Genomic organization and sequence variation of the human integrin subunit alpha8 gene (ITGA8).</title>
        <authorList>
            <person name="Ekwa-Ekoka C."/>
            <person name="Diaz G.A."/>
            <person name="Carlson C."/>
            <person name="Hasegawa T."/>
            <person name="Samudrala R."/>
            <person name="Lim K.-C."/>
            <person name="Yabu J.M."/>
            <person name="Levy B."/>
            <person name="Schnapp L.M."/>
        </authorList>
    </citation>
    <scope>VARIANTS LEU-567; PHE-577; PRO-581; HIS-748; VAL-993 AND ALA-994</scope>
</reference>
<dbReference type="EMBL" id="AY371697">
    <property type="protein sequence ID" value="AAQ56848.2"/>
    <property type="molecule type" value="Genomic_DNA"/>
</dbReference>
<dbReference type="EMBL" id="EF444991">
    <property type="protein sequence ID" value="ACA06009.1"/>
    <property type="molecule type" value="Genomic_DNA"/>
</dbReference>
<dbReference type="EMBL" id="AL359645">
    <property type="status" value="NOT_ANNOTATED_CDS"/>
    <property type="molecule type" value="Genomic_DNA"/>
</dbReference>
<dbReference type="EMBL" id="AL590636">
    <property type="status" value="NOT_ANNOTATED_CDS"/>
    <property type="molecule type" value="Genomic_DNA"/>
</dbReference>
<dbReference type="EMBL" id="CH471072">
    <property type="protein sequence ID" value="EAW86235.1"/>
    <property type="molecule type" value="Genomic_DNA"/>
</dbReference>
<dbReference type="EMBL" id="L36531">
    <property type="protein sequence ID" value="AAA93514.1"/>
    <property type="molecule type" value="mRNA"/>
</dbReference>
<dbReference type="CCDS" id="CCDS31155.1"/>
<dbReference type="RefSeq" id="NP_003629.2">
    <property type="nucleotide sequence ID" value="NM_003638.3"/>
</dbReference>
<dbReference type="SMR" id="P53708"/>
<dbReference type="BioGRID" id="114088">
    <property type="interactions" value="66"/>
</dbReference>
<dbReference type="ComplexPortal" id="CPX-1815">
    <property type="entry name" value="Integrin alpha8-beta1 complex"/>
</dbReference>
<dbReference type="CORUM" id="P53708"/>
<dbReference type="FunCoup" id="P53708">
    <property type="interactions" value="971"/>
</dbReference>
<dbReference type="IntAct" id="P53708">
    <property type="interactions" value="56"/>
</dbReference>
<dbReference type="STRING" id="9606.ENSP00000367316"/>
<dbReference type="BindingDB" id="P53708"/>
<dbReference type="GlyCosmos" id="P53708">
    <property type="glycosylation" value="20 sites, 1 glycan"/>
</dbReference>
<dbReference type="GlyGen" id="P53708">
    <property type="glycosylation" value="20 sites, 10 N-linked glycans (6 sites), 1 O-linked glycan (4 sites)"/>
</dbReference>
<dbReference type="iPTMnet" id="P53708"/>
<dbReference type="PhosphoSitePlus" id="P53708"/>
<dbReference type="SwissPalm" id="P53708"/>
<dbReference type="BioMuta" id="ITGA8"/>
<dbReference type="DMDM" id="311033437"/>
<dbReference type="jPOST" id="P53708"/>
<dbReference type="MassIVE" id="P53708"/>
<dbReference type="PaxDb" id="9606-ENSP00000367316"/>
<dbReference type="PeptideAtlas" id="P53708"/>
<dbReference type="ProteomicsDB" id="56614"/>
<dbReference type="Antibodypedia" id="961">
    <property type="antibodies" value="211 antibodies from 29 providers"/>
</dbReference>
<dbReference type="DNASU" id="8516"/>
<dbReference type="Ensembl" id="ENST00000378076.4">
    <property type="protein sequence ID" value="ENSP00000367316.3"/>
    <property type="gene ID" value="ENSG00000077943.8"/>
</dbReference>
<dbReference type="GeneID" id="8516"/>
<dbReference type="KEGG" id="hsa:8516"/>
<dbReference type="MANE-Select" id="ENST00000378076.4">
    <property type="protein sequence ID" value="ENSP00000367316.3"/>
    <property type="RefSeq nucleotide sequence ID" value="NM_003638.3"/>
    <property type="RefSeq protein sequence ID" value="NP_003629.2"/>
</dbReference>
<dbReference type="UCSC" id="uc001ioc.2">
    <property type="organism name" value="human"/>
</dbReference>
<dbReference type="AGR" id="HGNC:6144"/>
<dbReference type="CTD" id="8516"/>
<dbReference type="DisGeNET" id="8516"/>
<dbReference type="GeneCards" id="ITGA8"/>
<dbReference type="HGNC" id="HGNC:6144">
    <property type="gene designation" value="ITGA8"/>
</dbReference>
<dbReference type="HPA" id="ENSG00000077943">
    <property type="expression patterns" value="Tissue enhanced (prostate)"/>
</dbReference>
<dbReference type="MalaCards" id="ITGA8"/>
<dbReference type="MIM" id="191830">
    <property type="type" value="phenotype"/>
</dbReference>
<dbReference type="MIM" id="604063">
    <property type="type" value="gene"/>
</dbReference>
<dbReference type="neXtProt" id="NX_P53708"/>
<dbReference type="OpenTargets" id="ENSG00000077943"/>
<dbReference type="Orphanet" id="1848">
    <property type="disease" value="Renal agenesis, bilateral"/>
</dbReference>
<dbReference type="PharmGKB" id="PA29944"/>
<dbReference type="VEuPathDB" id="HostDB:ENSG00000077943"/>
<dbReference type="eggNOG" id="KOG3637">
    <property type="taxonomic scope" value="Eukaryota"/>
</dbReference>
<dbReference type="GeneTree" id="ENSGT00940000156737"/>
<dbReference type="HOGENOM" id="CLU_004111_4_0_1"/>
<dbReference type="InParanoid" id="P53708"/>
<dbReference type="OMA" id="SPMENIW"/>
<dbReference type="OrthoDB" id="5317514at2759"/>
<dbReference type="PAN-GO" id="P53708">
    <property type="GO annotations" value="7 GO annotations based on evolutionary models"/>
</dbReference>
<dbReference type="PhylomeDB" id="P53708"/>
<dbReference type="TreeFam" id="TF105391"/>
<dbReference type="PathwayCommons" id="P53708"/>
<dbReference type="Reactome" id="R-HSA-2129379">
    <property type="pathway name" value="Molecules associated with elastic fibres"/>
</dbReference>
<dbReference type="Reactome" id="R-HSA-216083">
    <property type="pathway name" value="Integrin cell surface interactions"/>
</dbReference>
<dbReference type="Reactome" id="R-HSA-2173789">
    <property type="pathway name" value="TGF-beta receptor signaling activates SMADs"/>
</dbReference>
<dbReference type="Reactome" id="R-HSA-3000178">
    <property type="pathway name" value="ECM proteoglycans"/>
</dbReference>
<dbReference type="Reactome" id="R-HSA-9830674">
    <property type="pathway name" value="Formation of the ureteric bud"/>
</dbReference>
<dbReference type="SignaLink" id="P53708"/>
<dbReference type="SIGNOR" id="P53708"/>
<dbReference type="BioGRID-ORCS" id="8516">
    <property type="hits" value="5 hits in 1146 CRISPR screens"/>
</dbReference>
<dbReference type="ChiTaRS" id="ITGA8">
    <property type="organism name" value="human"/>
</dbReference>
<dbReference type="GeneWiki" id="ITGA8"/>
<dbReference type="GenomeRNAi" id="8516"/>
<dbReference type="Pharos" id="P53708">
    <property type="development level" value="Tbio"/>
</dbReference>
<dbReference type="PRO" id="PR:P53708"/>
<dbReference type="Proteomes" id="UP000005640">
    <property type="component" value="Chromosome 10"/>
</dbReference>
<dbReference type="RNAct" id="P53708">
    <property type="molecule type" value="protein"/>
</dbReference>
<dbReference type="Bgee" id="ENSG00000077943">
    <property type="expression patterns" value="Expressed in descending thoracic aorta and 186 other cell types or tissues"/>
</dbReference>
<dbReference type="GO" id="GO:0045177">
    <property type="term" value="C:apical part of cell"/>
    <property type="evidence" value="ECO:0007669"/>
    <property type="project" value="Ensembl"/>
</dbReference>
<dbReference type="GO" id="GO:0009986">
    <property type="term" value="C:cell surface"/>
    <property type="evidence" value="ECO:0000314"/>
    <property type="project" value="UniProtKB"/>
</dbReference>
<dbReference type="GO" id="GO:0032591">
    <property type="term" value="C:dendritic spine membrane"/>
    <property type="evidence" value="ECO:0007669"/>
    <property type="project" value="Ensembl"/>
</dbReference>
<dbReference type="GO" id="GO:0005783">
    <property type="term" value="C:endoplasmic reticulum"/>
    <property type="evidence" value="ECO:0000314"/>
    <property type="project" value="UniProtKB"/>
</dbReference>
<dbReference type="GO" id="GO:0009897">
    <property type="term" value="C:external side of plasma membrane"/>
    <property type="evidence" value="ECO:0000318"/>
    <property type="project" value="GO_Central"/>
</dbReference>
<dbReference type="GO" id="GO:0005925">
    <property type="term" value="C:focal adhesion"/>
    <property type="evidence" value="ECO:0007005"/>
    <property type="project" value="UniProtKB"/>
</dbReference>
<dbReference type="GO" id="GO:0098978">
    <property type="term" value="C:glutamatergic synapse"/>
    <property type="evidence" value="ECO:0007669"/>
    <property type="project" value="Ensembl"/>
</dbReference>
<dbReference type="GO" id="GO:0034678">
    <property type="term" value="C:integrin alpha8-beta1 complex"/>
    <property type="evidence" value="ECO:0000304"/>
    <property type="project" value="BHF-UCL"/>
</dbReference>
<dbReference type="GO" id="GO:0008305">
    <property type="term" value="C:integrin complex"/>
    <property type="evidence" value="ECO:0000318"/>
    <property type="project" value="GO_Central"/>
</dbReference>
<dbReference type="GO" id="GO:0043204">
    <property type="term" value="C:perikaryon"/>
    <property type="evidence" value="ECO:0007669"/>
    <property type="project" value="Ensembl"/>
</dbReference>
<dbReference type="GO" id="GO:0005886">
    <property type="term" value="C:plasma membrane"/>
    <property type="evidence" value="ECO:0000314"/>
    <property type="project" value="HPA"/>
</dbReference>
<dbReference type="GO" id="GO:0098839">
    <property type="term" value="C:postsynaptic density membrane"/>
    <property type="evidence" value="ECO:0007669"/>
    <property type="project" value="Ensembl"/>
</dbReference>
<dbReference type="GO" id="GO:0005178">
    <property type="term" value="F:integrin binding"/>
    <property type="evidence" value="ECO:0000318"/>
    <property type="project" value="GO_Central"/>
</dbReference>
<dbReference type="GO" id="GO:0046872">
    <property type="term" value="F:metal ion binding"/>
    <property type="evidence" value="ECO:0007669"/>
    <property type="project" value="UniProtKB-KW"/>
</dbReference>
<dbReference type="GO" id="GO:0033627">
    <property type="term" value="P:cell adhesion mediated by integrin"/>
    <property type="evidence" value="ECO:0000318"/>
    <property type="project" value="GO_Central"/>
</dbReference>
<dbReference type="GO" id="GO:0030030">
    <property type="term" value="P:cell projection organization"/>
    <property type="evidence" value="ECO:0007669"/>
    <property type="project" value="Ensembl"/>
</dbReference>
<dbReference type="GO" id="GO:0098609">
    <property type="term" value="P:cell-cell adhesion"/>
    <property type="evidence" value="ECO:0000318"/>
    <property type="project" value="GO_Central"/>
</dbReference>
<dbReference type="GO" id="GO:0007160">
    <property type="term" value="P:cell-matrix adhesion"/>
    <property type="evidence" value="ECO:0000315"/>
    <property type="project" value="UniProtKB"/>
</dbReference>
<dbReference type="GO" id="GO:0045184">
    <property type="term" value="P:establishment of protein localization"/>
    <property type="evidence" value="ECO:0007669"/>
    <property type="project" value="Ensembl"/>
</dbReference>
<dbReference type="GO" id="GO:0030198">
    <property type="term" value="P:extracellular matrix organization"/>
    <property type="evidence" value="ECO:0007669"/>
    <property type="project" value="Ensembl"/>
</dbReference>
<dbReference type="GO" id="GO:0042472">
    <property type="term" value="P:inner ear morphogenesis"/>
    <property type="evidence" value="ECO:0007669"/>
    <property type="project" value="Ensembl"/>
</dbReference>
<dbReference type="GO" id="GO:0007229">
    <property type="term" value="P:integrin-mediated signaling pathway"/>
    <property type="evidence" value="ECO:0000318"/>
    <property type="project" value="GO_Central"/>
</dbReference>
<dbReference type="GO" id="GO:0001822">
    <property type="term" value="P:kidney development"/>
    <property type="evidence" value="ECO:0000315"/>
    <property type="project" value="UniProtKB"/>
</dbReference>
<dbReference type="GO" id="GO:0007613">
    <property type="term" value="P:memory"/>
    <property type="evidence" value="ECO:0007669"/>
    <property type="project" value="Ensembl"/>
</dbReference>
<dbReference type="GO" id="GO:0048333">
    <property type="term" value="P:mesodermal cell differentiation"/>
    <property type="evidence" value="ECO:0000270"/>
    <property type="project" value="UniProtKB"/>
</dbReference>
<dbReference type="GO" id="GO:0001656">
    <property type="term" value="P:metanephros development"/>
    <property type="evidence" value="ECO:0007669"/>
    <property type="project" value="Ensembl"/>
</dbReference>
<dbReference type="GO" id="GO:0007399">
    <property type="term" value="P:nervous system development"/>
    <property type="evidence" value="ECO:0007669"/>
    <property type="project" value="UniProtKB-KW"/>
</dbReference>
<dbReference type="GO" id="GO:0045944">
    <property type="term" value="P:positive regulation of transcription by RNA polymerase II"/>
    <property type="evidence" value="ECO:0007669"/>
    <property type="project" value="Ensembl"/>
</dbReference>
<dbReference type="GO" id="GO:0030511">
    <property type="term" value="P:positive regulation of transforming growth factor beta receptor signaling pathway"/>
    <property type="evidence" value="ECO:0007669"/>
    <property type="project" value="Ensembl"/>
</dbReference>
<dbReference type="GO" id="GO:0051145">
    <property type="term" value="P:smooth muscle cell differentiation"/>
    <property type="evidence" value="ECO:0007669"/>
    <property type="project" value="Ensembl"/>
</dbReference>
<dbReference type="GO" id="GO:0048745">
    <property type="term" value="P:smooth muscle tissue development"/>
    <property type="evidence" value="ECO:0007669"/>
    <property type="project" value="Ensembl"/>
</dbReference>
<dbReference type="GO" id="GO:0034446">
    <property type="term" value="P:substrate adhesion-dependent cell spreading"/>
    <property type="evidence" value="ECO:0000315"/>
    <property type="project" value="UniProtKB"/>
</dbReference>
<dbReference type="GO" id="GO:0007179">
    <property type="term" value="P:transforming growth factor beta receptor signaling pathway"/>
    <property type="evidence" value="ECO:0007669"/>
    <property type="project" value="Ensembl"/>
</dbReference>
<dbReference type="FunFam" id="2.130.10.130:FF:000003">
    <property type="entry name" value="Integrin alpha V"/>
    <property type="match status" value="1"/>
</dbReference>
<dbReference type="FunFam" id="2.60.40.1510:FF:000001">
    <property type="entry name" value="Integrin alpha V"/>
    <property type="match status" value="1"/>
</dbReference>
<dbReference type="FunFam" id="1.20.5.930:FF:000001">
    <property type="entry name" value="Integrin subunit alpha V"/>
    <property type="match status" value="1"/>
</dbReference>
<dbReference type="FunFam" id="2.60.40.1530:FF:000012">
    <property type="entry name" value="Integrin, alpha 8"/>
    <property type="match status" value="1"/>
</dbReference>
<dbReference type="FunFam" id="2.60.40.1460:FF:000001">
    <property type="entry name" value="Integrin, alpha V"/>
    <property type="match status" value="1"/>
</dbReference>
<dbReference type="Gene3D" id="1.20.5.930">
    <property type="entry name" value="Bicelle-embedded integrin alpha(iib) transmembrane segment"/>
    <property type="match status" value="1"/>
</dbReference>
<dbReference type="Gene3D" id="2.130.10.130">
    <property type="entry name" value="Integrin alpha, N-terminal"/>
    <property type="match status" value="1"/>
</dbReference>
<dbReference type="Gene3D" id="2.60.40.1460">
    <property type="entry name" value="Integrin domains. Chain A, domain 2"/>
    <property type="match status" value="1"/>
</dbReference>
<dbReference type="Gene3D" id="2.60.40.1510">
    <property type="entry name" value="ntegrin, alpha v. Chain A, domain 3"/>
    <property type="match status" value="1"/>
</dbReference>
<dbReference type="Gene3D" id="2.60.40.1530">
    <property type="entry name" value="ntegrin, alpha v. Chain A, domain 4"/>
    <property type="match status" value="1"/>
</dbReference>
<dbReference type="InterPro" id="IPR013517">
    <property type="entry name" value="FG-GAP"/>
</dbReference>
<dbReference type="InterPro" id="IPR013519">
    <property type="entry name" value="Int_alpha_beta-p"/>
</dbReference>
<dbReference type="InterPro" id="IPR000413">
    <property type="entry name" value="Integrin_alpha"/>
</dbReference>
<dbReference type="InterPro" id="IPR018184">
    <property type="entry name" value="Integrin_alpha_C_CS"/>
</dbReference>
<dbReference type="InterPro" id="IPR013649">
    <property type="entry name" value="Integrin_alpha_Ig-like_1"/>
</dbReference>
<dbReference type="InterPro" id="IPR048285">
    <property type="entry name" value="Integrin_alpha_Ig-like_2"/>
</dbReference>
<dbReference type="InterPro" id="IPR048286">
    <property type="entry name" value="Integrin_alpha_Ig-like_3"/>
</dbReference>
<dbReference type="InterPro" id="IPR028994">
    <property type="entry name" value="Integrin_alpha_N"/>
</dbReference>
<dbReference type="InterPro" id="IPR032695">
    <property type="entry name" value="Integrin_dom_sf"/>
</dbReference>
<dbReference type="PANTHER" id="PTHR23220">
    <property type="entry name" value="INTEGRIN ALPHA"/>
    <property type="match status" value="1"/>
</dbReference>
<dbReference type="PANTHER" id="PTHR23220:SF5">
    <property type="entry name" value="INTEGRIN ALPHA-8"/>
    <property type="match status" value="1"/>
</dbReference>
<dbReference type="Pfam" id="PF01839">
    <property type="entry name" value="FG-GAP"/>
    <property type="match status" value="3"/>
</dbReference>
<dbReference type="Pfam" id="PF08441">
    <property type="entry name" value="Integrin_A_Ig_1"/>
    <property type="match status" value="1"/>
</dbReference>
<dbReference type="Pfam" id="PF20805">
    <property type="entry name" value="Integrin_A_Ig_2"/>
    <property type="match status" value="1"/>
</dbReference>
<dbReference type="Pfam" id="PF20806">
    <property type="entry name" value="Integrin_A_Ig_3"/>
    <property type="match status" value="1"/>
</dbReference>
<dbReference type="Pfam" id="PF00357">
    <property type="entry name" value="Integrin_alpha"/>
    <property type="match status" value="1"/>
</dbReference>
<dbReference type="PRINTS" id="PR01185">
    <property type="entry name" value="INTEGRINA"/>
</dbReference>
<dbReference type="SMART" id="SM00191">
    <property type="entry name" value="Int_alpha"/>
    <property type="match status" value="6"/>
</dbReference>
<dbReference type="SUPFAM" id="SSF69318">
    <property type="entry name" value="Integrin alpha N-terminal domain"/>
    <property type="match status" value="1"/>
</dbReference>
<dbReference type="SUPFAM" id="SSF69179">
    <property type="entry name" value="Integrin domains"/>
    <property type="match status" value="3"/>
</dbReference>
<dbReference type="PROSITE" id="PS51470">
    <property type="entry name" value="FG_GAP"/>
    <property type="match status" value="7"/>
</dbReference>
<dbReference type="PROSITE" id="PS00242">
    <property type="entry name" value="INTEGRIN_ALPHA"/>
    <property type="match status" value="1"/>
</dbReference>